<name>LAX4_MEDTR</name>
<reference key="1">
    <citation type="journal article" date="2004" name="Mol. Genet. Genomics">
        <title>The PIN and LAX families of auxin transport genes in Medicago truncatula.</title>
        <authorList>
            <person name="Schnabel E.L."/>
            <person name="Frugoli J."/>
        </authorList>
    </citation>
    <scope>NUCLEOTIDE SEQUENCE [GENOMIC DNA]</scope>
    <scope>GENE FAMILY</scope>
    <scope>TISSUE SPECIFICITY</scope>
</reference>
<reference key="2">
    <citation type="journal article" date="2001" name="Mol. Plant Microbe Interact.">
        <title>Expression studies on AUX1-like genes in Medicago truncatula suggest that auxin is required at two steps in early nodule development.</title>
        <authorList>
            <person name="de Billy F."/>
            <person name="Grosjean C."/>
            <person name="May S."/>
            <person name="Bennett M.J."/>
            <person name="Cullimore J.V."/>
        </authorList>
    </citation>
    <scope>FUNCTION</scope>
    <scope>TISSUE SPECIFICITY</scope>
    <scope>DEVELOPMENTAL STAGE</scope>
</reference>
<gene>
    <name type="primary">LAX4</name>
</gene>
<organism>
    <name type="scientific">Medicago truncatula</name>
    <name type="common">Barrel medic</name>
    <name type="synonym">Medicago tribuloides</name>
    <dbReference type="NCBI Taxonomy" id="3880"/>
    <lineage>
        <taxon>Eukaryota</taxon>
        <taxon>Viridiplantae</taxon>
        <taxon>Streptophyta</taxon>
        <taxon>Embryophyta</taxon>
        <taxon>Tracheophyta</taxon>
        <taxon>Spermatophyta</taxon>
        <taxon>Magnoliopsida</taxon>
        <taxon>eudicotyledons</taxon>
        <taxon>Gunneridae</taxon>
        <taxon>Pentapetalae</taxon>
        <taxon>rosids</taxon>
        <taxon>fabids</taxon>
        <taxon>Fabales</taxon>
        <taxon>Fabaceae</taxon>
        <taxon>Papilionoideae</taxon>
        <taxon>50 kb inversion clade</taxon>
        <taxon>NPAAA clade</taxon>
        <taxon>Hologalegina</taxon>
        <taxon>IRL clade</taxon>
        <taxon>Trifolieae</taxon>
        <taxon>Medicago</taxon>
    </lineage>
</organism>
<protein>
    <recommendedName>
        <fullName>Auxin transporter-like protein 4</fullName>
    </recommendedName>
    <alternativeName>
        <fullName>AUX1-like protein 4</fullName>
    </alternativeName>
    <alternativeName>
        <fullName>MtLAX4</fullName>
    </alternativeName>
</protein>
<evidence type="ECO:0000250" key="1"/>
<evidence type="ECO:0000255" key="2"/>
<evidence type="ECO:0000269" key="3">
    <source>
    </source>
</evidence>
<evidence type="ECO:0000269" key="4">
    <source>
    </source>
</evidence>
<evidence type="ECO:0000305" key="5"/>
<feature type="chain" id="PRO_0000093848" description="Auxin transporter-like protein 4">
    <location>
        <begin position="1"/>
        <end position="482"/>
    </location>
</feature>
<feature type="topological domain" description="Cytoplasmic" evidence="2">
    <location>
        <begin position="1"/>
        <end position="59"/>
    </location>
</feature>
<feature type="transmembrane region" description="Helical" evidence="2">
    <location>
        <begin position="60"/>
        <end position="77"/>
    </location>
</feature>
<feature type="topological domain" description="Extracellular" evidence="2">
    <location>
        <begin position="78"/>
        <end position="79"/>
    </location>
</feature>
<feature type="transmembrane region" description="Helical" evidence="2">
    <location>
        <begin position="80"/>
        <end position="100"/>
    </location>
</feature>
<feature type="topological domain" description="Cytoplasmic" evidence="2">
    <location>
        <begin position="101"/>
        <end position="135"/>
    </location>
</feature>
<feature type="transmembrane region" description="Helical" evidence="2">
    <location>
        <begin position="136"/>
        <end position="156"/>
    </location>
</feature>
<feature type="topological domain" description="Extracellular" evidence="2">
    <location>
        <begin position="157"/>
        <end position="172"/>
    </location>
</feature>
<feature type="transmembrane region" description="Helical" evidence="2">
    <location>
        <begin position="173"/>
        <end position="193"/>
    </location>
</feature>
<feature type="topological domain" description="Cytoplasmic" evidence="2">
    <location>
        <begin position="194"/>
        <end position="196"/>
    </location>
</feature>
<feature type="transmembrane region" description="Helical" evidence="2">
    <location>
        <begin position="197"/>
        <end position="217"/>
    </location>
</feature>
<feature type="topological domain" description="Extracellular" evidence="2">
    <location>
        <begin position="218"/>
        <end position="232"/>
    </location>
</feature>
<feature type="transmembrane region" description="Helical" evidence="2">
    <location>
        <begin position="233"/>
        <end position="253"/>
    </location>
</feature>
<feature type="topological domain" description="Cytoplasmic" evidence="2">
    <location>
        <begin position="254"/>
        <end position="266"/>
    </location>
</feature>
<feature type="transmembrane region" description="Helical" evidence="2">
    <location>
        <begin position="267"/>
        <end position="287"/>
    </location>
</feature>
<feature type="topological domain" description="Extracellular" evidence="2">
    <location>
        <begin position="288"/>
        <end position="314"/>
    </location>
</feature>
<feature type="transmembrane region" description="Helical" evidence="2">
    <location>
        <begin position="315"/>
        <end position="335"/>
    </location>
</feature>
<feature type="topological domain" description="Cytoplasmic" evidence="2">
    <location>
        <begin position="336"/>
        <end position="356"/>
    </location>
</feature>
<feature type="transmembrane region" description="Helical" evidence="2">
    <location>
        <begin position="357"/>
        <end position="377"/>
    </location>
</feature>
<feature type="topological domain" description="Extracellular" evidence="2">
    <location>
        <position position="378"/>
    </location>
</feature>
<feature type="transmembrane region" description="Helical" evidence="2">
    <location>
        <begin position="379"/>
        <end position="399"/>
    </location>
</feature>
<feature type="topological domain" description="Cytoplasmic" evidence="2">
    <location>
        <begin position="400"/>
        <end position="422"/>
    </location>
</feature>
<feature type="transmembrane region" description="Helical" evidence="2">
    <location>
        <begin position="423"/>
        <end position="443"/>
    </location>
</feature>
<feature type="topological domain" description="Extracellular" evidence="2">
    <location>
        <begin position="444"/>
        <end position="482"/>
    </location>
</feature>
<feature type="glycosylation site" description="N-linked (GlcNAc...) asparagine" evidence="2">
    <location>
        <position position="297"/>
    </location>
</feature>
<dbReference type="EMBL" id="AY115844">
    <property type="protein sequence ID" value="AAM55305.1"/>
    <property type="molecule type" value="Genomic_DNA"/>
</dbReference>
<dbReference type="RefSeq" id="XP_013455165.1">
    <property type="nucleotide sequence ID" value="XM_013599711.1"/>
</dbReference>
<dbReference type="SMR" id="Q8L884"/>
<dbReference type="GlyCosmos" id="Q8L884">
    <property type="glycosylation" value="1 site, No reported glycans"/>
</dbReference>
<dbReference type="EnsemblPlants" id="rna20721">
    <property type="protein sequence ID" value="RHN58777.1"/>
    <property type="gene ID" value="gene20721"/>
</dbReference>
<dbReference type="GeneID" id="25494399"/>
<dbReference type="Gramene" id="rna20721">
    <property type="protein sequence ID" value="RHN58777.1"/>
    <property type="gene ID" value="gene20721"/>
</dbReference>
<dbReference type="KEGG" id="mtr:25494399"/>
<dbReference type="OrthoDB" id="40134at2759"/>
<dbReference type="ExpressionAtlas" id="Q8L884">
    <property type="expression patterns" value="differential"/>
</dbReference>
<dbReference type="GO" id="GO:0005886">
    <property type="term" value="C:plasma membrane"/>
    <property type="evidence" value="ECO:0007669"/>
    <property type="project" value="UniProtKB-SubCell"/>
</dbReference>
<dbReference type="GO" id="GO:0015293">
    <property type="term" value="F:symporter activity"/>
    <property type="evidence" value="ECO:0007669"/>
    <property type="project" value="UniProtKB-KW"/>
</dbReference>
<dbReference type="GO" id="GO:0006865">
    <property type="term" value="P:amino acid transport"/>
    <property type="evidence" value="ECO:0007669"/>
    <property type="project" value="UniProtKB-KW"/>
</dbReference>
<dbReference type="GO" id="GO:0009734">
    <property type="term" value="P:auxin-activated signaling pathway"/>
    <property type="evidence" value="ECO:0007669"/>
    <property type="project" value="UniProtKB-KW"/>
</dbReference>
<dbReference type="InterPro" id="IPR013057">
    <property type="entry name" value="AA_transpt_TM"/>
</dbReference>
<dbReference type="PANTHER" id="PTHR48017">
    <property type="entry name" value="OS05G0424000 PROTEIN-RELATED"/>
    <property type="match status" value="1"/>
</dbReference>
<dbReference type="Pfam" id="PF01490">
    <property type="entry name" value="Aa_trans"/>
    <property type="match status" value="1"/>
</dbReference>
<sequence length="482" mass="54412">MLSQNQAEEAIVTNMNETEQEGGSSLEEIAEDQSMFNFKSFLWHGGSVWDAWFSCASNQVAQVLLTLPYSFSQLGMVSGIVFQIFYGLIGSWTAYLISVLYVEYRARKEKENVNFKNHVIQWFEVLDGLLGRYWKALGLAFNCTFLLFGSVIQLIACASNIYYINDKLDKRTWTYIFGACCATTVFIPSFHNYRIWSFLGLGMTTYTAWYMAIAAIVNGQIENVVHSGPTKLVLYFTGATNILYTFGGHAVTVEIMHAMWKPQKFKYIYFLATLYVFTLTIPSAVAVYWAFGDELLNHSNAFSLLPKNGFRDAAVILMLIHQFITFGFACTPLYFVWEKVIGMHDTKSICLRALVRLPVVIPIWFLAIIFPFFGPINSAVGALLVTFTVYIIPALAHMLTYRTASARKNAVEKPPSFLPSWTAVYVLNAFIVVWVLVVGFGFGGWASMTNFIRQIDTFGLFAKCYQCKPPTPPQAPSPHARH</sequence>
<accession>Q8L884</accession>
<comment type="function">
    <text evidence="1 3">Carrier protein involved in proton-driven auxin influx. Mediates the formation of auxin gradient from developing leaves (site of auxin biosynthesis) to tips by contributing to the loading of auxin in vascular tissues and facilitating acropetal (base to tip) auxin transport within inner tissues of the root apex, and basipetal (tip to base) auxin transport within outer tissues of the root apex (By similarity). May be involved in lateral roots and nodules formation.</text>
</comment>
<comment type="subcellular location">
    <subcellularLocation>
        <location evidence="1">Cell membrane</location>
        <topology evidence="1">Multi-pass membrane protein</topology>
    </subcellularLocation>
</comment>
<comment type="tissue specificity">
    <text evidence="3 4">Shoots and roots of nodulating plants, at low levels.</text>
</comment>
<comment type="developmental stage">
    <text evidence="3">In primary roots, mostly localized in tips and to a lower extent in vasculature of older regions. In root tips, mostly expressed in the central tissues of the elongating zone (developing vasculature), in the starch-filled cells of the root cap and in some cortical cells. During lateral root development, striking expression in the proximal region of the primordium, close to the primary root central cylinder, and then in elongating cells of the developing vasculature and in developing root cap. During nodule formation, expressed in young elongated primordium, mostly in cells close to the root vasculature. In later stages, confined in small cells rich in amyloplasts with small nuclei. Near the periphery of developing nodules strong expression at the base that tapers off toward the apex. Not expressed in mature nodules.</text>
</comment>
<comment type="similarity">
    <text evidence="5">Belongs to the amino acid/polyamine transporter 2 family. Amino acid/auxin permease (AAAP) (TC 2.A.18.1) subfamily.</text>
</comment>
<comment type="caution">
    <text evidence="5">Because of the similarity in sequence, the probe used to describe the developmental stages did not discriminate among the various MtLAX mRNAs.</text>
</comment>
<keyword id="KW-0029">Amino-acid transport</keyword>
<keyword id="KW-0927">Auxin signaling pathway</keyword>
<keyword id="KW-1003">Cell membrane</keyword>
<keyword id="KW-0325">Glycoprotein</keyword>
<keyword id="KW-0472">Membrane</keyword>
<keyword id="KW-0769">Symport</keyword>
<keyword id="KW-0812">Transmembrane</keyword>
<keyword id="KW-1133">Transmembrane helix</keyword>
<keyword id="KW-0813">Transport</keyword>
<proteinExistence type="evidence at transcript level"/>